<organism>
    <name type="scientific">Mus musculus</name>
    <name type="common">Mouse</name>
    <dbReference type="NCBI Taxonomy" id="10090"/>
    <lineage>
        <taxon>Eukaryota</taxon>
        <taxon>Metazoa</taxon>
        <taxon>Chordata</taxon>
        <taxon>Craniata</taxon>
        <taxon>Vertebrata</taxon>
        <taxon>Euteleostomi</taxon>
        <taxon>Mammalia</taxon>
        <taxon>Eutheria</taxon>
        <taxon>Euarchontoglires</taxon>
        <taxon>Glires</taxon>
        <taxon>Rodentia</taxon>
        <taxon>Myomorpha</taxon>
        <taxon>Muroidea</taxon>
        <taxon>Muridae</taxon>
        <taxon>Murinae</taxon>
        <taxon>Mus</taxon>
        <taxon>Mus</taxon>
    </lineage>
</organism>
<keyword id="KW-0010">Activator</keyword>
<keyword id="KW-0221">Differentiation</keyword>
<keyword id="KW-0479">Metal-binding</keyword>
<keyword id="KW-0539">Nucleus</keyword>
<keyword id="KW-1185">Reference proteome</keyword>
<keyword id="KW-0804">Transcription</keyword>
<keyword id="KW-0805">Transcription regulation</keyword>
<keyword id="KW-0862">Zinc</keyword>
<keyword id="KW-0863">Zinc-finger</keyword>
<gene>
    <name type="primary">Znf750</name>
    <name type="synonym">Zfp750</name>
</gene>
<evidence type="ECO:0000250" key="1"/>
<evidence type="ECO:0000250" key="2">
    <source>
        <dbReference type="UniProtKB" id="Q32MQ0"/>
    </source>
</evidence>
<evidence type="ECO:0000256" key="3">
    <source>
        <dbReference type="SAM" id="MobiDB-lite"/>
    </source>
</evidence>
<evidence type="ECO:0000305" key="4"/>
<comment type="function">
    <text evidence="1">Transcription factor involved in epidermis differentiation. Required for terminal epidermal differentiation: acts downstream of p63/TP63 and activates expression of late epidermal differentiation genes. Specifically binds to the promoter of KLF4 and promotes its expression (By similarity).</text>
</comment>
<comment type="subcellular location">
    <subcellularLocation>
        <location evidence="1">Nucleus</location>
    </subcellularLocation>
</comment>
<protein>
    <recommendedName>
        <fullName>Zinc finger protein 750</fullName>
    </recommendedName>
</protein>
<dbReference type="EMBL" id="AK030690">
    <property type="protein sequence ID" value="BAC27080.1"/>
    <property type="molecule type" value="mRNA"/>
</dbReference>
<dbReference type="EMBL" id="AK037185">
    <property type="protein sequence ID" value="BAC29743.1"/>
    <property type="molecule type" value="mRNA"/>
</dbReference>
<dbReference type="EMBL" id="AK037240">
    <property type="protein sequence ID" value="BAC29771.1"/>
    <property type="molecule type" value="mRNA"/>
</dbReference>
<dbReference type="EMBL" id="AL663088">
    <property type="status" value="NOT_ANNOTATED_CDS"/>
    <property type="molecule type" value="Genomic_DNA"/>
</dbReference>
<dbReference type="EMBL" id="BC150905">
    <property type="protein sequence ID" value="AAI50906.1"/>
    <property type="molecule type" value="mRNA"/>
</dbReference>
<dbReference type="CCDS" id="CCDS25779.1"/>
<dbReference type="RefSeq" id="NP_848878.1">
    <property type="nucleotide sequence ID" value="NM_178763.4"/>
</dbReference>
<dbReference type="SMR" id="Q8BH05"/>
<dbReference type="FunCoup" id="Q8BH05">
    <property type="interactions" value="1158"/>
</dbReference>
<dbReference type="STRING" id="10090.ENSMUSP00000089951"/>
<dbReference type="PhosphoSitePlus" id="Q8BH05"/>
<dbReference type="PaxDb" id="10090-ENSMUSP00000089951"/>
<dbReference type="ProteomicsDB" id="275035"/>
<dbReference type="Antibodypedia" id="19924">
    <property type="antibodies" value="112 antibodies from 26 providers"/>
</dbReference>
<dbReference type="DNASU" id="319530"/>
<dbReference type="Ensembl" id="ENSMUST00000092298.6">
    <property type="protein sequence ID" value="ENSMUSP00000089951.6"/>
    <property type="gene ID" value="ENSMUSG00000039238.7"/>
</dbReference>
<dbReference type="GeneID" id="319530"/>
<dbReference type="KEGG" id="mmu:319530"/>
<dbReference type="UCSC" id="uc007mvz.2">
    <property type="organism name" value="mouse"/>
</dbReference>
<dbReference type="AGR" id="MGI:2442210"/>
<dbReference type="CTD" id="319530"/>
<dbReference type="MGI" id="MGI:2442210">
    <property type="gene designation" value="Zfp750"/>
</dbReference>
<dbReference type="VEuPathDB" id="HostDB:ENSMUSG00000039238"/>
<dbReference type="eggNOG" id="ENOG502QU7X">
    <property type="taxonomic scope" value="Eukaryota"/>
</dbReference>
<dbReference type="GeneTree" id="ENSGT00530000063870"/>
<dbReference type="HOGENOM" id="CLU_023455_0_0_1"/>
<dbReference type="InParanoid" id="Q8BH05"/>
<dbReference type="OMA" id="PSAYDHY"/>
<dbReference type="OrthoDB" id="8933073at2759"/>
<dbReference type="PhylomeDB" id="Q8BH05"/>
<dbReference type="TreeFam" id="TF331381"/>
<dbReference type="Reactome" id="R-MMU-212436">
    <property type="pathway name" value="Generic Transcription Pathway"/>
</dbReference>
<dbReference type="BioGRID-ORCS" id="319530">
    <property type="hits" value="3 hits in 78 CRISPR screens"/>
</dbReference>
<dbReference type="PRO" id="PR:Q8BH05"/>
<dbReference type="Proteomes" id="UP000000589">
    <property type="component" value="Chromosome 11"/>
</dbReference>
<dbReference type="RNAct" id="Q8BH05">
    <property type="molecule type" value="protein"/>
</dbReference>
<dbReference type="Bgee" id="ENSMUSG00000039238">
    <property type="expression patterns" value="Expressed in animal zygote and 86 other cell types or tissues"/>
</dbReference>
<dbReference type="GO" id="GO:0005634">
    <property type="term" value="C:nucleus"/>
    <property type="evidence" value="ECO:0000250"/>
    <property type="project" value="UniProtKB"/>
</dbReference>
<dbReference type="GO" id="GO:0001228">
    <property type="term" value="F:DNA-binding transcription activator activity, RNA polymerase II-specific"/>
    <property type="evidence" value="ECO:0000250"/>
    <property type="project" value="UniProtKB"/>
</dbReference>
<dbReference type="GO" id="GO:0001227">
    <property type="term" value="F:DNA-binding transcription repressor activity, RNA polymerase II-specific"/>
    <property type="evidence" value="ECO:0007669"/>
    <property type="project" value="Ensembl"/>
</dbReference>
<dbReference type="GO" id="GO:1990841">
    <property type="term" value="F:promoter-specific chromatin binding"/>
    <property type="evidence" value="ECO:0000250"/>
    <property type="project" value="UniProtKB"/>
</dbReference>
<dbReference type="GO" id="GO:0000978">
    <property type="term" value="F:RNA polymerase II cis-regulatory region sequence-specific DNA binding"/>
    <property type="evidence" value="ECO:0000250"/>
    <property type="project" value="UniProtKB"/>
</dbReference>
<dbReference type="GO" id="GO:0008270">
    <property type="term" value="F:zinc ion binding"/>
    <property type="evidence" value="ECO:0007669"/>
    <property type="project" value="UniProtKB-KW"/>
</dbReference>
<dbReference type="GO" id="GO:0030154">
    <property type="term" value="P:cell differentiation"/>
    <property type="evidence" value="ECO:0007669"/>
    <property type="project" value="UniProtKB-KW"/>
</dbReference>
<dbReference type="GO" id="GO:0008544">
    <property type="term" value="P:epidermis development"/>
    <property type="evidence" value="ECO:0000250"/>
    <property type="project" value="UniProtKB"/>
</dbReference>
<dbReference type="GO" id="GO:0061436">
    <property type="term" value="P:establishment of skin barrier"/>
    <property type="evidence" value="ECO:0000315"/>
    <property type="project" value="MGI"/>
</dbReference>
<dbReference type="GO" id="GO:0044091">
    <property type="term" value="P:membrane biogenesis"/>
    <property type="evidence" value="ECO:0000315"/>
    <property type="project" value="MGI"/>
</dbReference>
<dbReference type="GO" id="GO:0010719">
    <property type="term" value="P:negative regulation of epithelial to mesenchymal transition"/>
    <property type="evidence" value="ECO:0007669"/>
    <property type="project" value="Ensembl"/>
</dbReference>
<dbReference type="GO" id="GO:2000304">
    <property type="term" value="P:positive regulation of ceramide biosynthetic process"/>
    <property type="evidence" value="ECO:0000315"/>
    <property type="project" value="MGI"/>
</dbReference>
<dbReference type="GO" id="GO:0010628">
    <property type="term" value="P:positive regulation of gene expression"/>
    <property type="evidence" value="ECO:0000315"/>
    <property type="project" value="MGI"/>
</dbReference>
<dbReference type="GO" id="GO:0045944">
    <property type="term" value="P:positive regulation of transcription by RNA polymerase II"/>
    <property type="evidence" value="ECO:0000250"/>
    <property type="project" value="UniProtKB"/>
</dbReference>
<dbReference type="GO" id="GO:0006357">
    <property type="term" value="P:regulation of transcription by RNA polymerase II"/>
    <property type="evidence" value="ECO:0000266"/>
    <property type="project" value="MGI"/>
</dbReference>
<dbReference type="InterPro" id="IPR039363">
    <property type="entry name" value="ZNF750"/>
</dbReference>
<dbReference type="InterPro" id="IPR039064">
    <property type="entry name" value="ZNF750_Znf"/>
</dbReference>
<dbReference type="PANTHER" id="PTHR14678">
    <property type="entry name" value="PROLINE-RICH PROTEIN 35-RELATED"/>
    <property type="match status" value="1"/>
</dbReference>
<dbReference type="PANTHER" id="PTHR14678:SF1">
    <property type="entry name" value="ZINC FINGER PROTEIN 750"/>
    <property type="match status" value="1"/>
</dbReference>
<dbReference type="Pfam" id="PF15269">
    <property type="entry name" value="zf-C2H2_7"/>
    <property type="match status" value="1"/>
</dbReference>
<feature type="chain" id="PRO_0000247071" description="Zinc finger protein 750">
    <location>
        <begin position="1"/>
        <end position="703"/>
    </location>
</feature>
<feature type="zinc finger region" description="CCHC-type" evidence="2">
    <location>
        <begin position="25"/>
        <end position="51"/>
    </location>
</feature>
<feature type="region of interest" description="Disordered" evidence="3">
    <location>
        <begin position="64"/>
        <end position="113"/>
    </location>
</feature>
<feature type="region of interest" description="Disordered" evidence="3">
    <location>
        <begin position="350"/>
        <end position="527"/>
    </location>
</feature>
<feature type="region of interest" description="Disordered" evidence="3">
    <location>
        <begin position="553"/>
        <end position="614"/>
    </location>
</feature>
<feature type="region of interest" description="Disordered" evidence="3">
    <location>
        <begin position="630"/>
        <end position="703"/>
    </location>
</feature>
<feature type="compositionally biased region" description="Polar residues" evidence="3">
    <location>
        <begin position="67"/>
        <end position="106"/>
    </location>
</feature>
<feature type="compositionally biased region" description="Low complexity" evidence="3">
    <location>
        <begin position="352"/>
        <end position="361"/>
    </location>
</feature>
<feature type="compositionally biased region" description="Basic and acidic residues" evidence="3">
    <location>
        <begin position="367"/>
        <end position="394"/>
    </location>
</feature>
<feature type="compositionally biased region" description="Polar residues" evidence="3">
    <location>
        <begin position="410"/>
        <end position="421"/>
    </location>
</feature>
<feature type="compositionally biased region" description="Polar residues" evidence="3">
    <location>
        <begin position="456"/>
        <end position="477"/>
    </location>
</feature>
<feature type="compositionally biased region" description="Basic and acidic residues" evidence="3">
    <location>
        <begin position="574"/>
        <end position="611"/>
    </location>
</feature>
<feature type="compositionally biased region" description="Polar residues" evidence="3">
    <location>
        <begin position="639"/>
        <end position="655"/>
    </location>
</feature>
<feature type="binding site" evidence="2">
    <location>
        <position position="27"/>
    </location>
    <ligand>
        <name>Zn(2+)</name>
        <dbReference type="ChEBI" id="CHEBI:29105"/>
    </ligand>
</feature>
<feature type="binding site" evidence="2">
    <location>
        <position position="30"/>
    </location>
    <ligand>
        <name>Zn(2+)</name>
        <dbReference type="ChEBI" id="CHEBI:29105"/>
    </ligand>
</feature>
<feature type="binding site" evidence="2">
    <location>
        <position position="43"/>
    </location>
    <ligand>
        <name>Zn(2+)</name>
        <dbReference type="ChEBI" id="CHEBI:29105"/>
    </ligand>
</feature>
<feature type="binding site" evidence="2">
    <location>
        <position position="49"/>
    </location>
    <ligand>
        <name>Zn(2+)</name>
        <dbReference type="ChEBI" id="CHEBI:29105"/>
    </ligand>
</feature>
<feature type="sequence conflict" description="In Ref. 1; BAC27080." evidence="4" ref="1">
    <original>L</original>
    <variation>Q</variation>
    <location>
        <position position="131"/>
    </location>
</feature>
<feature type="sequence conflict" description="In Ref. 1; BAC27080." evidence="4" ref="1">
    <original>F</original>
    <variation>L</variation>
    <location>
        <position position="421"/>
    </location>
</feature>
<feature type="sequence conflict" description="In Ref. 3; AAI50906." evidence="4" ref="3">
    <original>V</original>
    <variation>A</variation>
    <location>
        <position position="638"/>
    </location>
</feature>
<accession>Q8BH05</accession>
<accession>B1ATU1</accession>
<accession>B9EKG8</accession>
<accession>Q66JP3</accession>
<accession>Q8C0L1</accession>
<name>ZN750_MOUSE</name>
<proteinExistence type="evidence at transcript level"/>
<reference key="1">
    <citation type="journal article" date="2005" name="Science">
        <title>The transcriptional landscape of the mammalian genome.</title>
        <authorList>
            <person name="Carninci P."/>
            <person name="Kasukawa T."/>
            <person name="Katayama S."/>
            <person name="Gough J."/>
            <person name="Frith M.C."/>
            <person name="Maeda N."/>
            <person name="Oyama R."/>
            <person name="Ravasi T."/>
            <person name="Lenhard B."/>
            <person name="Wells C."/>
            <person name="Kodzius R."/>
            <person name="Shimokawa K."/>
            <person name="Bajic V.B."/>
            <person name="Brenner S.E."/>
            <person name="Batalov S."/>
            <person name="Forrest A.R."/>
            <person name="Zavolan M."/>
            <person name="Davis M.J."/>
            <person name="Wilming L.G."/>
            <person name="Aidinis V."/>
            <person name="Allen J.E."/>
            <person name="Ambesi-Impiombato A."/>
            <person name="Apweiler R."/>
            <person name="Aturaliya R.N."/>
            <person name="Bailey T.L."/>
            <person name="Bansal M."/>
            <person name="Baxter L."/>
            <person name="Beisel K.W."/>
            <person name="Bersano T."/>
            <person name="Bono H."/>
            <person name="Chalk A.M."/>
            <person name="Chiu K.P."/>
            <person name="Choudhary V."/>
            <person name="Christoffels A."/>
            <person name="Clutterbuck D.R."/>
            <person name="Crowe M.L."/>
            <person name="Dalla E."/>
            <person name="Dalrymple B.P."/>
            <person name="de Bono B."/>
            <person name="Della Gatta G."/>
            <person name="di Bernardo D."/>
            <person name="Down T."/>
            <person name="Engstrom P."/>
            <person name="Fagiolini M."/>
            <person name="Faulkner G."/>
            <person name="Fletcher C.F."/>
            <person name="Fukushima T."/>
            <person name="Furuno M."/>
            <person name="Futaki S."/>
            <person name="Gariboldi M."/>
            <person name="Georgii-Hemming P."/>
            <person name="Gingeras T.R."/>
            <person name="Gojobori T."/>
            <person name="Green R.E."/>
            <person name="Gustincich S."/>
            <person name="Harbers M."/>
            <person name="Hayashi Y."/>
            <person name="Hensch T.K."/>
            <person name="Hirokawa N."/>
            <person name="Hill D."/>
            <person name="Huminiecki L."/>
            <person name="Iacono M."/>
            <person name="Ikeo K."/>
            <person name="Iwama A."/>
            <person name="Ishikawa T."/>
            <person name="Jakt M."/>
            <person name="Kanapin A."/>
            <person name="Katoh M."/>
            <person name="Kawasawa Y."/>
            <person name="Kelso J."/>
            <person name="Kitamura H."/>
            <person name="Kitano H."/>
            <person name="Kollias G."/>
            <person name="Krishnan S.P."/>
            <person name="Kruger A."/>
            <person name="Kummerfeld S.K."/>
            <person name="Kurochkin I.V."/>
            <person name="Lareau L.F."/>
            <person name="Lazarevic D."/>
            <person name="Lipovich L."/>
            <person name="Liu J."/>
            <person name="Liuni S."/>
            <person name="McWilliam S."/>
            <person name="Madan Babu M."/>
            <person name="Madera M."/>
            <person name="Marchionni L."/>
            <person name="Matsuda H."/>
            <person name="Matsuzawa S."/>
            <person name="Miki H."/>
            <person name="Mignone F."/>
            <person name="Miyake S."/>
            <person name="Morris K."/>
            <person name="Mottagui-Tabar S."/>
            <person name="Mulder N."/>
            <person name="Nakano N."/>
            <person name="Nakauchi H."/>
            <person name="Ng P."/>
            <person name="Nilsson R."/>
            <person name="Nishiguchi S."/>
            <person name="Nishikawa S."/>
            <person name="Nori F."/>
            <person name="Ohara O."/>
            <person name="Okazaki Y."/>
            <person name="Orlando V."/>
            <person name="Pang K.C."/>
            <person name="Pavan W.J."/>
            <person name="Pavesi G."/>
            <person name="Pesole G."/>
            <person name="Petrovsky N."/>
            <person name="Piazza S."/>
            <person name="Reed J."/>
            <person name="Reid J.F."/>
            <person name="Ring B.Z."/>
            <person name="Ringwald M."/>
            <person name="Rost B."/>
            <person name="Ruan Y."/>
            <person name="Salzberg S.L."/>
            <person name="Sandelin A."/>
            <person name="Schneider C."/>
            <person name="Schoenbach C."/>
            <person name="Sekiguchi K."/>
            <person name="Semple C.A."/>
            <person name="Seno S."/>
            <person name="Sessa L."/>
            <person name="Sheng Y."/>
            <person name="Shibata Y."/>
            <person name="Shimada H."/>
            <person name="Shimada K."/>
            <person name="Silva D."/>
            <person name="Sinclair B."/>
            <person name="Sperling S."/>
            <person name="Stupka E."/>
            <person name="Sugiura K."/>
            <person name="Sultana R."/>
            <person name="Takenaka Y."/>
            <person name="Taki K."/>
            <person name="Tammoja K."/>
            <person name="Tan S.L."/>
            <person name="Tang S."/>
            <person name="Taylor M.S."/>
            <person name="Tegner J."/>
            <person name="Teichmann S.A."/>
            <person name="Ueda H.R."/>
            <person name="van Nimwegen E."/>
            <person name="Verardo R."/>
            <person name="Wei C.L."/>
            <person name="Yagi K."/>
            <person name="Yamanishi H."/>
            <person name="Zabarovsky E."/>
            <person name="Zhu S."/>
            <person name="Zimmer A."/>
            <person name="Hide W."/>
            <person name="Bult C."/>
            <person name="Grimmond S.M."/>
            <person name="Teasdale R.D."/>
            <person name="Liu E.T."/>
            <person name="Brusic V."/>
            <person name="Quackenbush J."/>
            <person name="Wahlestedt C."/>
            <person name="Mattick J.S."/>
            <person name="Hume D.A."/>
            <person name="Kai C."/>
            <person name="Sasaki D."/>
            <person name="Tomaru Y."/>
            <person name="Fukuda S."/>
            <person name="Kanamori-Katayama M."/>
            <person name="Suzuki M."/>
            <person name="Aoki J."/>
            <person name="Arakawa T."/>
            <person name="Iida J."/>
            <person name="Imamura K."/>
            <person name="Itoh M."/>
            <person name="Kato T."/>
            <person name="Kawaji H."/>
            <person name="Kawagashira N."/>
            <person name="Kawashima T."/>
            <person name="Kojima M."/>
            <person name="Kondo S."/>
            <person name="Konno H."/>
            <person name="Nakano K."/>
            <person name="Ninomiya N."/>
            <person name="Nishio T."/>
            <person name="Okada M."/>
            <person name="Plessy C."/>
            <person name="Shibata K."/>
            <person name="Shiraki T."/>
            <person name="Suzuki S."/>
            <person name="Tagami M."/>
            <person name="Waki K."/>
            <person name="Watahiki A."/>
            <person name="Okamura-Oho Y."/>
            <person name="Suzuki H."/>
            <person name="Kawai J."/>
            <person name="Hayashizaki Y."/>
        </authorList>
    </citation>
    <scope>NUCLEOTIDE SEQUENCE [LARGE SCALE MRNA]</scope>
    <source>
        <strain>C57BL/6J</strain>
        <tissue>Head</tissue>
        <tissue>Skin</tissue>
    </source>
</reference>
<reference key="2">
    <citation type="journal article" date="2009" name="PLoS Biol.">
        <title>Lineage-specific biology revealed by a finished genome assembly of the mouse.</title>
        <authorList>
            <person name="Church D.M."/>
            <person name="Goodstadt L."/>
            <person name="Hillier L.W."/>
            <person name="Zody M.C."/>
            <person name="Goldstein S."/>
            <person name="She X."/>
            <person name="Bult C.J."/>
            <person name="Agarwala R."/>
            <person name="Cherry J.L."/>
            <person name="DiCuccio M."/>
            <person name="Hlavina W."/>
            <person name="Kapustin Y."/>
            <person name="Meric P."/>
            <person name="Maglott D."/>
            <person name="Birtle Z."/>
            <person name="Marques A.C."/>
            <person name="Graves T."/>
            <person name="Zhou S."/>
            <person name="Teague B."/>
            <person name="Potamousis K."/>
            <person name="Churas C."/>
            <person name="Place M."/>
            <person name="Herschleb J."/>
            <person name="Runnheim R."/>
            <person name="Forrest D."/>
            <person name="Amos-Landgraf J."/>
            <person name="Schwartz D.C."/>
            <person name="Cheng Z."/>
            <person name="Lindblad-Toh K."/>
            <person name="Eichler E.E."/>
            <person name="Ponting C.P."/>
        </authorList>
    </citation>
    <scope>NUCLEOTIDE SEQUENCE [LARGE SCALE GENOMIC DNA]</scope>
    <source>
        <strain>C57BL/6J</strain>
    </source>
</reference>
<reference key="3">
    <citation type="journal article" date="2004" name="Genome Res.">
        <title>The status, quality, and expansion of the NIH full-length cDNA project: the Mammalian Gene Collection (MGC).</title>
        <authorList>
            <consortium name="The MGC Project Team"/>
        </authorList>
    </citation>
    <scope>NUCLEOTIDE SEQUENCE [LARGE SCALE MRNA]</scope>
    <source>
        <tissue>Brain</tissue>
    </source>
</reference>
<sequence length="703" mass="76645">MSLLKERKPKKPHYIPRPPGKPFKYKCFQCPFTCNEKSHLFNHMKYGLCKNSITLVSEQDRIPKCPKSSSLDPKQTHQPEPTSKPATSKSLLNGLSSFDPKSQQGSAKEDAKENLEMQARGAHKGPQKPALQKEMAPEAILSTQPCLDSGVRHSAFVPVGEHRLRGPEDTEATEVLANSTTKASSFHAKSAFHTPGYPWKAGSPFLPPDFPHKISSTKGFGAISPYMHPAIPEYPHPFYAEHGLAAIYSPYLLTGNTPECETTLLSVYGTQDQRHFLSPAGPIPKHLNTSPSTYDHYRFFQQYHSNLPIPYGFYRPESAFPSYSLRLPSVTGITRDQSSRLLEDATLAYPASSPSELNLSSSHRKHTECEKGSPVPEAKDPSKDGQRDAEEAKMSPRAGSAATGSPGRPSPTNFTQTSQTFEGLCDLSNKAASSGTLERLQQAEQSPTAFKPVQRGSESPHSQPPANRTESPKSLQAMNGDPPAQTGSSNSFITEAPPSSPEDHSRIGPLNLSKKLETNPAATYGPMYASNAQADTLQDLPLNLSVKDLCNAWAPRPALPGPPQGAEPAATPKTETKGSEDRTSRVETPQDKAHSRTTPDVHTEDSSDEQKQTAAVALCQLAAYSPGNVRVADEEGTVQEPTRQDVPTLSATENLEAQCDLRPKGQKRTSQRDTGKSQQGTKKPKLNDPVPRVLTLRRRTRVS</sequence>